<accession>Q5RDI0</accession>
<protein>
    <recommendedName>
        <fullName>S1 RNA-binding domain-containing protein 1</fullName>
    </recommendedName>
</protein>
<proteinExistence type="evidence at transcript level"/>
<name>SRBD1_PONAB</name>
<gene>
    <name type="primary">SRBD1</name>
</gene>
<sequence>MSSLPRRAKVQVQGVVLKDEFSSFSELSSASEEDDKEDSAWEPQKKVPRSRKQPPPKESKPKRMPQVKKNAPQISDGSEVVVVKEELNSSVAIADTALEDRKNKLNTVQTLKTAKTKRKCAAQPHAVRRTKKLKVDEETSKASYLEGESNSSETPSTSTVWGGTCKKEENDDEFTFGQSPLKKIKTETCPQGQPVKFPANANHIKEEVEMNWDIVQVLSERTNIEPWVCTNTIRLFNDDNTIPFIIRYRKELINNLDADSLREVQQTLEELRAVAKKVHSTIQKIKKEGKMSECLLKAMLNCKTFEELEHVSAPYKTGSKGTKAQRARQLGLEGAARALLEKPGELSLLSYIRPDVKGLSTLQDIEIGAQHILADMIAKDKGTLDFIRNLCQNRHVCIQSSLAKVSSKKVNEKDVDKFLLYQHFSCNIRNIHHHQILAINRGENLKVLTVKVNISDGVKDEFCRWCIQNRWRPRSFARPELMKILRNSLNDSFKRLIYPLLCREFRAKLTSDAEKESVMMFGRNLRQLLLTSPVPGRTLMGVDPGYKHGCKLAIISPTSQILHTDVVYLHCGQGFREAEKIKMLLLNFNCSTVVIGNGTACRETEAYFADLIMKNYFAPLDVVYCIVSEAGASIYSVSPEANKEMPGLDPNLRSAVSIARRVQDPLAELVKIEPKHIGVGMYQHDVSQTLLKATLDSVVEECVSFVGVDINICSEVLLRHIAGLNANRAKNIIEWREKNGPFINREQLKKVKGLGPKSFQQCAGFIRINQDYIQTFCSQQTETSGQIQGVAVTSSADVEVTNEKQGKKKSKTVANVLLKPNPLDQTCIHPESYDIAMRFLSSIGGTLYEIGKPEMQQKINSFLEKEGMEKIAERLQTTVHTLQVIIDGLSQPESFDFRTDFDKPDFKRSIVCLKDLQVGTVLTGKVENATLFGIFVDIGVGKSGLIPIRNVTEAKLSKTKKRRSLGLGPGERVEVQVLNIDIPRSRITLDLIRVL</sequence>
<evidence type="ECO:0000250" key="1">
    <source>
        <dbReference type="UniProtKB" id="Q8N5C6"/>
    </source>
</evidence>
<evidence type="ECO:0000255" key="2"/>
<evidence type="ECO:0000255" key="3">
    <source>
        <dbReference type="PROSITE-ProRule" id="PRU00180"/>
    </source>
</evidence>
<evidence type="ECO:0000256" key="4">
    <source>
        <dbReference type="SAM" id="MobiDB-lite"/>
    </source>
</evidence>
<feature type="chain" id="PRO_0000284359" description="S1 RNA-binding domain-containing protein 1">
    <location>
        <begin position="1"/>
        <end position="995"/>
    </location>
</feature>
<feature type="domain" description="S1 motif" evidence="3">
    <location>
        <begin position="919"/>
        <end position="992"/>
    </location>
</feature>
<feature type="region of interest" description="Disordered" evidence="4">
    <location>
        <begin position="23"/>
        <end position="78"/>
    </location>
</feature>
<feature type="region of interest" description="Disordered" evidence="4">
    <location>
        <begin position="116"/>
        <end position="164"/>
    </location>
</feature>
<feature type="coiled-coil region" evidence="2">
    <location>
        <begin position="258"/>
        <end position="288"/>
    </location>
</feature>
<feature type="compositionally biased region" description="Basic residues" evidence="4">
    <location>
        <begin position="116"/>
        <end position="132"/>
    </location>
</feature>
<feature type="compositionally biased region" description="Low complexity" evidence="4">
    <location>
        <begin position="146"/>
        <end position="159"/>
    </location>
</feature>
<feature type="modified residue" description="Phosphoserine" evidence="1">
    <location>
        <position position="861"/>
    </location>
</feature>
<feature type="modified residue" description="Phosphoserine" evidence="1">
    <location>
        <position position="964"/>
    </location>
</feature>
<feature type="cross-link" description="Glycyl lysine isopeptide (Lys-Gly) (interchain with G-Cter in SUMO2)" evidence="1">
    <location>
        <position position="84"/>
    </location>
</feature>
<feature type="cross-link" description="Glycyl lysine isopeptide (Lys-Gly) (interchain with G-Cter in SUMO2)" evidence="1">
    <location>
        <position position="134"/>
    </location>
</feature>
<feature type="cross-link" description="Glycyl lysine isopeptide (Lys-Gly) (interchain with G-Cter in SUMO2)" evidence="1">
    <location>
        <position position="166"/>
    </location>
</feature>
<feature type="cross-link" description="Glycyl lysine isopeptide (Lys-Gly) (interchain with G-Cter in SUMO2)" evidence="1">
    <location>
        <position position="167"/>
    </location>
</feature>
<feature type="cross-link" description="Glycyl lysine isopeptide (Lys-Gly) (interchain with G-Cter in SUMO2)" evidence="1">
    <location>
        <position position="183"/>
    </location>
</feature>
<feature type="cross-link" description="Glycyl lysine isopeptide (Lys-Gly) (interchain with G-Cter in SUMO1); alternate" evidence="1">
    <location>
        <position position="185"/>
    </location>
</feature>
<feature type="cross-link" description="Glycyl lysine isopeptide (Lys-Gly) (interchain with G-Cter in SUMO2); alternate" evidence="1">
    <location>
        <position position="185"/>
    </location>
</feature>
<feature type="cross-link" description="Glycyl lysine isopeptide (Lys-Gly) (interchain with G-Cter in SUMO2)" evidence="1">
    <location>
        <position position="955"/>
    </location>
</feature>
<dbReference type="EMBL" id="CR857929">
    <property type="protein sequence ID" value="CAH90177.1"/>
    <property type="molecule type" value="mRNA"/>
</dbReference>
<dbReference type="RefSeq" id="NP_001127248.1">
    <property type="nucleotide sequence ID" value="NM_001133776.1"/>
</dbReference>
<dbReference type="SMR" id="Q5RDI0"/>
<dbReference type="FunCoup" id="Q5RDI0">
    <property type="interactions" value="1277"/>
</dbReference>
<dbReference type="STRING" id="9601.ENSPPYP00000013898"/>
<dbReference type="GeneID" id="100174303"/>
<dbReference type="KEGG" id="pon:100174303"/>
<dbReference type="CTD" id="55133"/>
<dbReference type="eggNOG" id="KOG1857">
    <property type="taxonomic scope" value="Eukaryota"/>
</dbReference>
<dbReference type="InParanoid" id="Q5RDI0"/>
<dbReference type="OrthoDB" id="995477at2759"/>
<dbReference type="Proteomes" id="UP000001595">
    <property type="component" value="Unplaced"/>
</dbReference>
<dbReference type="GO" id="GO:0003729">
    <property type="term" value="F:mRNA binding"/>
    <property type="evidence" value="ECO:0007669"/>
    <property type="project" value="TreeGrafter"/>
</dbReference>
<dbReference type="GO" id="GO:0003735">
    <property type="term" value="F:structural constituent of ribosome"/>
    <property type="evidence" value="ECO:0007669"/>
    <property type="project" value="TreeGrafter"/>
</dbReference>
<dbReference type="GO" id="GO:0006139">
    <property type="term" value="P:nucleobase-containing compound metabolic process"/>
    <property type="evidence" value="ECO:0007669"/>
    <property type="project" value="InterPro"/>
</dbReference>
<dbReference type="GO" id="GO:0006412">
    <property type="term" value="P:translation"/>
    <property type="evidence" value="ECO:0007669"/>
    <property type="project" value="TreeGrafter"/>
</dbReference>
<dbReference type="CDD" id="cd05685">
    <property type="entry name" value="S1_Tex"/>
    <property type="match status" value="1"/>
</dbReference>
<dbReference type="FunFam" id="3.30.420.140:FF:000001">
    <property type="entry name" value="RNA-binding transcriptional accessory protein"/>
    <property type="match status" value="1"/>
</dbReference>
<dbReference type="FunFam" id="1.10.10.650:FF:000001">
    <property type="entry name" value="S1 RNA-binding domain 1"/>
    <property type="match status" value="1"/>
</dbReference>
<dbReference type="FunFam" id="1.10.3500.10:FF:000003">
    <property type="entry name" value="S1 RNA-binding domain-containing protein 1"/>
    <property type="match status" value="1"/>
</dbReference>
<dbReference type="FunFam" id="2.40.50.140:FF:000146">
    <property type="entry name" value="S1 RNA-binding domain-containing protein 1"/>
    <property type="match status" value="1"/>
</dbReference>
<dbReference type="Gene3D" id="2.40.50.140">
    <property type="entry name" value="Nucleic acid-binding proteins"/>
    <property type="match status" value="1"/>
</dbReference>
<dbReference type="Gene3D" id="1.10.10.650">
    <property type="entry name" value="RuvA domain 2-like"/>
    <property type="match status" value="1"/>
</dbReference>
<dbReference type="Gene3D" id="1.10.3500.10">
    <property type="entry name" value="Tex N-terminal region-like"/>
    <property type="match status" value="1"/>
</dbReference>
<dbReference type="Gene3D" id="1.10.150.310">
    <property type="entry name" value="Tex RuvX-like domain-like"/>
    <property type="match status" value="1"/>
</dbReference>
<dbReference type="Gene3D" id="3.30.420.140">
    <property type="entry name" value="YqgF/RNase H-like domain"/>
    <property type="match status" value="1"/>
</dbReference>
<dbReference type="InterPro" id="IPR041692">
    <property type="entry name" value="HHH_9"/>
</dbReference>
<dbReference type="InterPro" id="IPR012340">
    <property type="entry name" value="NA-bd_OB-fold"/>
</dbReference>
<dbReference type="InterPro" id="IPR050437">
    <property type="entry name" value="Ribos_protein_bS1-like"/>
</dbReference>
<dbReference type="InterPro" id="IPR012337">
    <property type="entry name" value="RNaseH-like_sf"/>
</dbReference>
<dbReference type="InterPro" id="IPR010994">
    <property type="entry name" value="RuvA_2-like"/>
</dbReference>
<dbReference type="InterPro" id="IPR003029">
    <property type="entry name" value="S1_domain"/>
</dbReference>
<dbReference type="InterPro" id="IPR044146">
    <property type="entry name" value="S1_Tex"/>
</dbReference>
<dbReference type="InterPro" id="IPR055179">
    <property type="entry name" value="Tex-like_central_region"/>
</dbReference>
<dbReference type="InterPro" id="IPR023323">
    <property type="entry name" value="Tex-like_dom_sf"/>
</dbReference>
<dbReference type="InterPro" id="IPR023319">
    <property type="entry name" value="Tex-like_HTH_dom_sf"/>
</dbReference>
<dbReference type="InterPro" id="IPR018974">
    <property type="entry name" value="Tex-like_N"/>
</dbReference>
<dbReference type="InterPro" id="IPR032639">
    <property type="entry name" value="Tex_YqgF"/>
</dbReference>
<dbReference type="InterPro" id="IPR006641">
    <property type="entry name" value="YqgF/RNaseH-like_dom"/>
</dbReference>
<dbReference type="InterPro" id="IPR037027">
    <property type="entry name" value="YqgF/RNaseH-like_dom_sf"/>
</dbReference>
<dbReference type="PANTHER" id="PTHR10724">
    <property type="entry name" value="30S RIBOSOMAL PROTEIN S1"/>
    <property type="match status" value="1"/>
</dbReference>
<dbReference type="PANTHER" id="PTHR10724:SF10">
    <property type="entry name" value="S1 RNA-BINDING DOMAIN-CONTAINING PROTEIN 1"/>
    <property type="match status" value="1"/>
</dbReference>
<dbReference type="Pfam" id="PF12836">
    <property type="entry name" value="HHH_3"/>
    <property type="match status" value="1"/>
</dbReference>
<dbReference type="Pfam" id="PF17674">
    <property type="entry name" value="HHH_9"/>
    <property type="match status" value="1"/>
</dbReference>
<dbReference type="Pfam" id="PF00575">
    <property type="entry name" value="S1"/>
    <property type="match status" value="1"/>
</dbReference>
<dbReference type="Pfam" id="PF22706">
    <property type="entry name" value="Tex_central_region"/>
    <property type="match status" value="1"/>
</dbReference>
<dbReference type="Pfam" id="PF09371">
    <property type="entry name" value="Tex_N"/>
    <property type="match status" value="1"/>
</dbReference>
<dbReference type="Pfam" id="PF16921">
    <property type="entry name" value="Tex_YqgF"/>
    <property type="match status" value="1"/>
</dbReference>
<dbReference type="SMART" id="SM00316">
    <property type="entry name" value="S1"/>
    <property type="match status" value="1"/>
</dbReference>
<dbReference type="SMART" id="SM00732">
    <property type="entry name" value="YqgFc"/>
    <property type="match status" value="1"/>
</dbReference>
<dbReference type="SUPFAM" id="SSF50249">
    <property type="entry name" value="Nucleic acid-binding proteins"/>
    <property type="match status" value="1"/>
</dbReference>
<dbReference type="SUPFAM" id="SSF53098">
    <property type="entry name" value="Ribonuclease H-like"/>
    <property type="match status" value="1"/>
</dbReference>
<dbReference type="SUPFAM" id="SSF47781">
    <property type="entry name" value="RuvA domain 2-like"/>
    <property type="match status" value="2"/>
</dbReference>
<dbReference type="SUPFAM" id="SSF158832">
    <property type="entry name" value="Tex N-terminal region-like"/>
    <property type="match status" value="1"/>
</dbReference>
<dbReference type="PROSITE" id="PS50126">
    <property type="entry name" value="S1"/>
    <property type="match status" value="1"/>
</dbReference>
<reference key="1">
    <citation type="submission" date="2004-11" db="EMBL/GenBank/DDBJ databases">
        <authorList>
            <consortium name="The German cDNA consortium"/>
        </authorList>
    </citation>
    <scope>NUCLEOTIDE SEQUENCE [LARGE SCALE MRNA]</scope>
    <source>
        <tissue>Kidney</tissue>
    </source>
</reference>
<organism>
    <name type="scientific">Pongo abelii</name>
    <name type="common">Sumatran orangutan</name>
    <name type="synonym">Pongo pygmaeus abelii</name>
    <dbReference type="NCBI Taxonomy" id="9601"/>
    <lineage>
        <taxon>Eukaryota</taxon>
        <taxon>Metazoa</taxon>
        <taxon>Chordata</taxon>
        <taxon>Craniata</taxon>
        <taxon>Vertebrata</taxon>
        <taxon>Euteleostomi</taxon>
        <taxon>Mammalia</taxon>
        <taxon>Eutheria</taxon>
        <taxon>Euarchontoglires</taxon>
        <taxon>Primates</taxon>
        <taxon>Haplorrhini</taxon>
        <taxon>Catarrhini</taxon>
        <taxon>Hominidae</taxon>
        <taxon>Pongo</taxon>
    </lineage>
</organism>
<keyword id="KW-0175">Coiled coil</keyword>
<keyword id="KW-1017">Isopeptide bond</keyword>
<keyword id="KW-0597">Phosphoprotein</keyword>
<keyword id="KW-1185">Reference proteome</keyword>
<keyword id="KW-0694">RNA-binding</keyword>
<keyword id="KW-0832">Ubl conjugation</keyword>